<sequence>MTSDSTVDKILAGKYPAKQHAENVVERLLHVHPDLTDGVIYLESQRSKLYENSDQEVPFRQRRYFYYLSGCDLADSYLTYSIRDRKLTLFIPPIDPASVLWSGLPLSNSEALEKYDVDEVLPTSATALPTTSYSSLMFVIESQTSRTFHLQNTESLEPAIERARAIKDEYEVALIKKANRISALAHHSCLRAIKSAGNEREIEAVFTKECIANGAPKQAYSGIFGSGRSASTLHYVHNNQPLAGKLNLLLDAGAEYNNYASDITRTFPISGQFTKESREVYDIVLDMQKQCLAASKAGAVWDDIHILAHKVAIQGLLKIGVLRNGSVDEILSNRTSTAFLPHGLGHYLGMDTHDCGGNPNYADPDPMFKYLRKRGPLPAGAVITVEPGIYFCEFIIKPYLEDEKHAKYIDKDVLNRYWDVGGVRIEDNILITEGGYENLTNVAKEVDDMLKFING</sequence>
<reference key="1">
    <citation type="journal article" date="2010" name="Nature">
        <title>Perigord black truffle genome uncovers evolutionary origins and mechanisms of symbiosis.</title>
        <authorList>
            <person name="Martin F."/>
            <person name="Kohler A."/>
            <person name="Murat C."/>
            <person name="Balestrini R."/>
            <person name="Coutinho P.M."/>
            <person name="Jaillon O."/>
            <person name="Montanini B."/>
            <person name="Morin E."/>
            <person name="Noel B."/>
            <person name="Percudani R."/>
            <person name="Porcel B."/>
            <person name="Rubini A."/>
            <person name="Amicucci A."/>
            <person name="Amselem J."/>
            <person name="Anthouard V."/>
            <person name="Arcioni S."/>
            <person name="Artiguenave F."/>
            <person name="Aury J.M."/>
            <person name="Ballario P."/>
            <person name="Bolchi A."/>
            <person name="Brenna A."/>
            <person name="Brun A."/>
            <person name="Buee M."/>
            <person name="Cantarel B."/>
            <person name="Chevalier G."/>
            <person name="Couloux A."/>
            <person name="Da Silva C."/>
            <person name="Denoeud F."/>
            <person name="Duplessis S."/>
            <person name="Ghignone S."/>
            <person name="Hilselberger B."/>
            <person name="Iotti M."/>
            <person name="Marcais B."/>
            <person name="Mello A."/>
            <person name="Miranda M."/>
            <person name="Pacioni G."/>
            <person name="Quesneville H."/>
            <person name="Riccioni C."/>
            <person name="Ruotolo R."/>
            <person name="Splivallo R."/>
            <person name="Stocchi V."/>
            <person name="Tisserant E."/>
            <person name="Viscomi A.R."/>
            <person name="Zambonelli A."/>
            <person name="Zampieri E."/>
            <person name="Henrissat B."/>
            <person name="Lebrun M.H."/>
            <person name="Paolocci F."/>
            <person name="Bonfante P."/>
            <person name="Ottonello S."/>
            <person name="Wincker P."/>
        </authorList>
    </citation>
    <scope>NUCLEOTIDE SEQUENCE [LARGE SCALE GENOMIC DNA]</scope>
    <source>
        <strain>Mel28</strain>
    </source>
</reference>
<feature type="chain" id="PRO_0000411855" description="Probable Xaa-Pro aminopeptidase GSTUM_00008071001">
    <location>
        <begin position="1"/>
        <end position="455"/>
    </location>
</feature>
<feature type="binding site" evidence="1">
    <location>
        <position position="251"/>
    </location>
    <ligand>
        <name>Mn(2+)</name>
        <dbReference type="ChEBI" id="CHEBI:29035"/>
        <label>2</label>
    </ligand>
</feature>
<feature type="binding site" evidence="1">
    <location>
        <position position="262"/>
    </location>
    <ligand>
        <name>Mn(2+)</name>
        <dbReference type="ChEBI" id="CHEBI:29035"/>
        <label>1</label>
    </ligand>
</feature>
<feature type="binding site" evidence="1">
    <location>
        <position position="262"/>
    </location>
    <ligand>
        <name>Mn(2+)</name>
        <dbReference type="ChEBI" id="CHEBI:29035"/>
        <label>2</label>
    </ligand>
</feature>
<feature type="binding site" evidence="1">
    <location>
        <position position="386"/>
    </location>
    <ligand>
        <name>Mn(2+)</name>
        <dbReference type="ChEBI" id="CHEBI:29035"/>
        <label>1</label>
    </ligand>
</feature>
<feature type="binding site" evidence="1">
    <location>
        <position position="426"/>
    </location>
    <ligand>
        <name>Mn(2+)</name>
        <dbReference type="ChEBI" id="CHEBI:29035"/>
        <label>1</label>
    </ligand>
</feature>
<feature type="binding site" evidence="1">
    <location>
        <position position="426"/>
    </location>
    <ligand>
        <name>Mn(2+)</name>
        <dbReference type="ChEBI" id="CHEBI:29035"/>
        <label>2</label>
    </ligand>
</feature>
<gene>
    <name type="ORF">GSTUM_00008071001</name>
</gene>
<name>AMPP2_TUBMM</name>
<comment type="function">
    <text evidence="1">Catalyzes the removal of a penultimate prolyl residue from the N-termini of peptides.</text>
</comment>
<comment type="catalytic activity">
    <reaction>
        <text>Release of any N-terminal amino acid, including proline, that is linked to proline, even from a dipeptide or tripeptide.</text>
        <dbReference type="EC" id="3.4.11.9"/>
    </reaction>
</comment>
<comment type="cofactor">
    <cofactor evidence="1">
        <name>Mn(2+)</name>
        <dbReference type="ChEBI" id="CHEBI:29035"/>
    </cofactor>
    <text evidence="1">Binds 2 manganese ions per subunit.</text>
</comment>
<comment type="similarity">
    <text evidence="2">Belongs to the peptidase M24B family.</text>
</comment>
<accession>D5GHP2</accession>
<evidence type="ECO:0000250" key="1"/>
<evidence type="ECO:0000305" key="2"/>
<proteinExistence type="inferred from homology"/>
<protein>
    <recommendedName>
        <fullName>Probable Xaa-Pro aminopeptidase GSTUM_00008071001</fullName>
        <ecNumber>3.4.11.9</ecNumber>
    </recommendedName>
    <alternativeName>
        <fullName>Aminoacylproline aminopeptidase</fullName>
    </alternativeName>
    <alternativeName>
        <fullName>Prolidase</fullName>
    </alternativeName>
</protein>
<organism>
    <name type="scientific">Tuber melanosporum (strain Mel28)</name>
    <name type="common">Perigord black truffle</name>
    <dbReference type="NCBI Taxonomy" id="656061"/>
    <lineage>
        <taxon>Eukaryota</taxon>
        <taxon>Fungi</taxon>
        <taxon>Dikarya</taxon>
        <taxon>Ascomycota</taxon>
        <taxon>Pezizomycotina</taxon>
        <taxon>Pezizomycetes</taxon>
        <taxon>Pezizales</taxon>
        <taxon>Tuberaceae</taxon>
        <taxon>Tuber</taxon>
    </lineage>
</organism>
<keyword id="KW-0031">Aminopeptidase</keyword>
<keyword id="KW-0378">Hydrolase</keyword>
<keyword id="KW-0464">Manganese</keyword>
<keyword id="KW-0479">Metal-binding</keyword>
<keyword id="KW-0482">Metalloprotease</keyword>
<keyword id="KW-0645">Protease</keyword>
<keyword id="KW-1185">Reference proteome</keyword>
<dbReference type="EC" id="3.4.11.9"/>
<dbReference type="EMBL" id="FN430320">
    <property type="protein sequence ID" value="CAZ84072.1"/>
    <property type="molecule type" value="Genomic_DNA"/>
</dbReference>
<dbReference type="RefSeq" id="XP_002839881.1">
    <property type="nucleotide sequence ID" value="XM_002839835.1"/>
</dbReference>
<dbReference type="SMR" id="D5GHP2"/>
<dbReference type="FunCoup" id="D5GHP2">
    <property type="interactions" value="372"/>
</dbReference>
<dbReference type="STRING" id="656061.D5GHP2"/>
<dbReference type="EnsemblFungi" id="CAZ84072">
    <property type="protein sequence ID" value="CAZ84072"/>
    <property type="gene ID" value="GSTUM_00008071001"/>
</dbReference>
<dbReference type="GeneID" id="9183726"/>
<dbReference type="KEGG" id="tml:GSTUM_00008071001"/>
<dbReference type="eggNOG" id="KOG2737">
    <property type="taxonomic scope" value="Eukaryota"/>
</dbReference>
<dbReference type="HOGENOM" id="CLU_017266_1_2_1"/>
<dbReference type="InParanoid" id="D5GHP2"/>
<dbReference type="OMA" id="DAHALFF"/>
<dbReference type="Proteomes" id="UP000006911">
    <property type="component" value="Unassembled WGS sequence"/>
</dbReference>
<dbReference type="GO" id="GO:0030145">
    <property type="term" value="F:manganese ion binding"/>
    <property type="evidence" value="ECO:0007669"/>
    <property type="project" value="InterPro"/>
</dbReference>
<dbReference type="GO" id="GO:0070006">
    <property type="term" value="F:metalloaminopeptidase activity"/>
    <property type="evidence" value="ECO:0007669"/>
    <property type="project" value="InterPro"/>
</dbReference>
<dbReference type="GO" id="GO:0006508">
    <property type="term" value="P:proteolysis"/>
    <property type="evidence" value="ECO:0007669"/>
    <property type="project" value="UniProtKB-KW"/>
</dbReference>
<dbReference type="CDD" id="cd01087">
    <property type="entry name" value="Prolidase"/>
    <property type="match status" value="1"/>
</dbReference>
<dbReference type="Gene3D" id="3.90.230.10">
    <property type="entry name" value="Creatinase/methionine aminopeptidase superfamily"/>
    <property type="match status" value="1"/>
</dbReference>
<dbReference type="Gene3D" id="3.40.350.10">
    <property type="entry name" value="Creatinase/prolidase N-terminal domain"/>
    <property type="match status" value="1"/>
</dbReference>
<dbReference type="InterPro" id="IPR007865">
    <property type="entry name" value="Aminopep_P_N"/>
</dbReference>
<dbReference type="InterPro" id="IPR029149">
    <property type="entry name" value="Creatin/AminoP/Spt16_N"/>
</dbReference>
<dbReference type="InterPro" id="IPR036005">
    <property type="entry name" value="Creatinase/aminopeptidase-like"/>
</dbReference>
<dbReference type="InterPro" id="IPR000994">
    <property type="entry name" value="Pept_M24"/>
</dbReference>
<dbReference type="InterPro" id="IPR052433">
    <property type="entry name" value="X-Pro_dipept-like"/>
</dbReference>
<dbReference type="PANTHER" id="PTHR43226">
    <property type="entry name" value="XAA-PRO AMINOPEPTIDASE 3"/>
    <property type="match status" value="1"/>
</dbReference>
<dbReference type="PANTHER" id="PTHR43226:SF1">
    <property type="entry name" value="XAA-PRO DIPEPTIDASE"/>
    <property type="match status" value="1"/>
</dbReference>
<dbReference type="Pfam" id="PF05195">
    <property type="entry name" value="AMP_N"/>
    <property type="match status" value="1"/>
</dbReference>
<dbReference type="Pfam" id="PF00557">
    <property type="entry name" value="Peptidase_M24"/>
    <property type="match status" value="1"/>
</dbReference>
<dbReference type="SMART" id="SM01011">
    <property type="entry name" value="AMP_N"/>
    <property type="match status" value="1"/>
</dbReference>
<dbReference type="SUPFAM" id="SSF55920">
    <property type="entry name" value="Creatinase/aminopeptidase"/>
    <property type="match status" value="1"/>
</dbReference>
<dbReference type="SUPFAM" id="SSF53092">
    <property type="entry name" value="Creatinase/prolidase N-terminal domain"/>
    <property type="match status" value="1"/>
</dbReference>